<protein>
    <recommendedName>
        <fullName evidence="1">Ribosome maturation factor RimM</fullName>
    </recommendedName>
</protein>
<sequence>MTDSPEETTVRVAVGRITRAHGVHGEVGVQVRTDDPDRRFAAGAVLTTDTGVTLTVQRTRWHSGRLLVRFAGIDDRTTAEDLRGRVLFAEVDERVRPEDPEEYYDYQLIGMRVETVTGQEIGVVREVLHLPGQDVLAIERSADGDAFVPFVAALVPEVDVDQRRLRIDPPPGLLEL</sequence>
<feature type="chain" id="PRO_0000321708" description="Ribosome maturation factor RimM">
    <location>
        <begin position="1"/>
        <end position="176"/>
    </location>
</feature>
<feature type="domain" description="PRC barrel" evidence="1">
    <location>
        <begin position="100"/>
        <end position="173"/>
    </location>
</feature>
<accession>A0LV71</accession>
<organism>
    <name type="scientific">Acidothermus cellulolyticus (strain ATCC 43068 / DSM 8971 / 11B)</name>
    <dbReference type="NCBI Taxonomy" id="351607"/>
    <lineage>
        <taxon>Bacteria</taxon>
        <taxon>Bacillati</taxon>
        <taxon>Actinomycetota</taxon>
        <taxon>Actinomycetes</taxon>
        <taxon>Acidothermales</taxon>
        <taxon>Acidothermaceae</taxon>
        <taxon>Acidothermus</taxon>
    </lineage>
</organism>
<dbReference type="EMBL" id="CP000481">
    <property type="protein sequence ID" value="ABK53331.1"/>
    <property type="molecule type" value="Genomic_DNA"/>
</dbReference>
<dbReference type="SMR" id="A0LV71"/>
<dbReference type="FunCoup" id="A0LV71">
    <property type="interactions" value="113"/>
</dbReference>
<dbReference type="STRING" id="351607.Acel_1559"/>
<dbReference type="KEGG" id="ace:Acel_1559"/>
<dbReference type="eggNOG" id="COG0806">
    <property type="taxonomic scope" value="Bacteria"/>
</dbReference>
<dbReference type="HOGENOM" id="CLU_077636_0_0_11"/>
<dbReference type="InParanoid" id="A0LV71"/>
<dbReference type="OrthoDB" id="5381335at2"/>
<dbReference type="Proteomes" id="UP000008221">
    <property type="component" value="Chromosome"/>
</dbReference>
<dbReference type="GO" id="GO:0005737">
    <property type="term" value="C:cytoplasm"/>
    <property type="evidence" value="ECO:0007669"/>
    <property type="project" value="UniProtKB-SubCell"/>
</dbReference>
<dbReference type="GO" id="GO:0005840">
    <property type="term" value="C:ribosome"/>
    <property type="evidence" value="ECO:0007669"/>
    <property type="project" value="InterPro"/>
</dbReference>
<dbReference type="GO" id="GO:0043022">
    <property type="term" value="F:ribosome binding"/>
    <property type="evidence" value="ECO:0007669"/>
    <property type="project" value="InterPro"/>
</dbReference>
<dbReference type="GO" id="GO:0042274">
    <property type="term" value="P:ribosomal small subunit biogenesis"/>
    <property type="evidence" value="ECO:0007669"/>
    <property type="project" value="UniProtKB-UniRule"/>
</dbReference>
<dbReference type="GO" id="GO:0006364">
    <property type="term" value="P:rRNA processing"/>
    <property type="evidence" value="ECO:0007669"/>
    <property type="project" value="UniProtKB-UniRule"/>
</dbReference>
<dbReference type="Gene3D" id="2.30.30.240">
    <property type="entry name" value="PRC-barrel domain"/>
    <property type="match status" value="1"/>
</dbReference>
<dbReference type="Gene3D" id="2.40.30.60">
    <property type="entry name" value="RimM"/>
    <property type="match status" value="1"/>
</dbReference>
<dbReference type="HAMAP" id="MF_00014">
    <property type="entry name" value="Ribosome_mat_RimM"/>
    <property type="match status" value="1"/>
</dbReference>
<dbReference type="InterPro" id="IPR011033">
    <property type="entry name" value="PRC_barrel-like_sf"/>
</dbReference>
<dbReference type="InterPro" id="IPR056792">
    <property type="entry name" value="PRC_RimM"/>
</dbReference>
<dbReference type="InterPro" id="IPR011961">
    <property type="entry name" value="RimM"/>
</dbReference>
<dbReference type="InterPro" id="IPR002676">
    <property type="entry name" value="RimM_N"/>
</dbReference>
<dbReference type="InterPro" id="IPR036976">
    <property type="entry name" value="RimM_N_sf"/>
</dbReference>
<dbReference type="InterPro" id="IPR009000">
    <property type="entry name" value="Transl_B-barrel_sf"/>
</dbReference>
<dbReference type="NCBIfam" id="TIGR02273">
    <property type="entry name" value="16S_RimM"/>
    <property type="match status" value="1"/>
</dbReference>
<dbReference type="PANTHER" id="PTHR33692">
    <property type="entry name" value="RIBOSOME MATURATION FACTOR RIMM"/>
    <property type="match status" value="1"/>
</dbReference>
<dbReference type="PANTHER" id="PTHR33692:SF1">
    <property type="entry name" value="RIBOSOME MATURATION FACTOR RIMM"/>
    <property type="match status" value="1"/>
</dbReference>
<dbReference type="Pfam" id="PF24986">
    <property type="entry name" value="PRC_RimM"/>
    <property type="match status" value="1"/>
</dbReference>
<dbReference type="Pfam" id="PF01782">
    <property type="entry name" value="RimM"/>
    <property type="match status" value="1"/>
</dbReference>
<dbReference type="SUPFAM" id="SSF50346">
    <property type="entry name" value="PRC-barrel domain"/>
    <property type="match status" value="1"/>
</dbReference>
<dbReference type="SUPFAM" id="SSF50447">
    <property type="entry name" value="Translation proteins"/>
    <property type="match status" value="1"/>
</dbReference>
<evidence type="ECO:0000255" key="1">
    <source>
        <dbReference type="HAMAP-Rule" id="MF_00014"/>
    </source>
</evidence>
<gene>
    <name evidence="1" type="primary">rimM</name>
    <name type="ordered locus">Acel_1559</name>
</gene>
<proteinExistence type="inferred from homology"/>
<keyword id="KW-0143">Chaperone</keyword>
<keyword id="KW-0963">Cytoplasm</keyword>
<keyword id="KW-1185">Reference proteome</keyword>
<keyword id="KW-0690">Ribosome biogenesis</keyword>
<keyword id="KW-0698">rRNA processing</keyword>
<reference key="1">
    <citation type="journal article" date="2009" name="Genome Res.">
        <title>Complete genome of the cellulolytic thermophile Acidothermus cellulolyticus 11B provides insights into its ecophysiological and evolutionary adaptations.</title>
        <authorList>
            <person name="Barabote R.D."/>
            <person name="Xie G."/>
            <person name="Leu D.H."/>
            <person name="Normand P."/>
            <person name="Necsulea A."/>
            <person name="Daubin V."/>
            <person name="Medigue C."/>
            <person name="Adney W.S."/>
            <person name="Xu X.C."/>
            <person name="Lapidus A."/>
            <person name="Parales R.E."/>
            <person name="Detter C."/>
            <person name="Pujic P."/>
            <person name="Bruce D."/>
            <person name="Lavire C."/>
            <person name="Challacombe J.F."/>
            <person name="Brettin T.S."/>
            <person name="Berry A.M."/>
        </authorList>
    </citation>
    <scope>NUCLEOTIDE SEQUENCE [LARGE SCALE GENOMIC DNA]</scope>
    <source>
        <strain>ATCC 43068 / DSM 8971 / 11B</strain>
    </source>
</reference>
<comment type="function">
    <text evidence="1">An accessory protein needed during the final step in the assembly of 30S ribosomal subunit, possibly for assembly of the head region. Essential for efficient processing of 16S rRNA. May be needed both before and after RbfA during the maturation of 16S rRNA. It has affinity for free ribosomal 30S subunits but not for 70S ribosomes.</text>
</comment>
<comment type="subunit">
    <text evidence="1">Binds ribosomal protein uS19.</text>
</comment>
<comment type="subcellular location">
    <subcellularLocation>
        <location evidence="1">Cytoplasm</location>
    </subcellularLocation>
</comment>
<comment type="domain">
    <text evidence="1">The PRC barrel domain binds ribosomal protein uS19.</text>
</comment>
<comment type="similarity">
    <text evidence="1">Belongs to the RimM family.</text>
</comment>
<name>RIMM_ACIC1</name>